<keyword id="KW-1185">Reference proteome</keyword>
<accession>Q5UQV5</accession>
<name>YR369_MIMIV</name>
<feature type="chain" id="PRO_0000251114" description="Uncharacterized protein R369">
    <location>
        <begin position="1"/>
        <end position="445"/>
    </location>
</feature>
<sequence>MTDNINIVHKKLFNVIDANFTKILKLKGVVNDIDDNGKFLTIKTLDTERTLKCRTKDNFTKVDVGDVVDVVGNLQLDSNDLSNIYLDLKYLSKQSTFDPSKALSIHNKLLVYLNEHEKVSKVVKKIHKKSLPKQIYNVALIAFPTGINLVNTFKTEFKNKCVGNLYTFYMDTDKTDVSIVSALEYFRKYRNIDIICLLTDQLNIMETCKLSSKEIAKVFLSRKNCPYILSIVSDSSEKNPEPITALLSNKKIETTLAAVNFISEVQWEYRQKVNRAVDLVKEKFYIHMDKKIKKLQQYEVLIWNLNKTSPPINSTDNLKNLLRNKMTEEFDRLNRIETELVNNIIMSDPIQKIVNNIDMFDSNIFMKIVDSIIDKMKNDKAQDKSLATTIKENALRQNLAFQSGQVDINKSRTLQDALVEEMKDHITQDPYLNYKERDENDIVDP</sequence>
<organism>
    <name type="scientific">Acanthamoeba polyphaga mimivirus</name>
    <name type="common">APMV</name>
    <dbReference type="NCBI Taxonomy" id="212035"/>
    <lineage>
        <taxon>Viruses</taxon>
        <taxon>Varidnaviria</taxon>
        <taxon>Bamfordvirae</taxon>
        <taxon>Nucleocytoviricota</taxon>
        <taxon>Megaviricetes</taxon>
        <taxon>Imitervirales</taxon>
        <taxon>Mimiviridae</taxon>
        <taxon>Megamimivirinae</taxon>
        <taxon>Mimivirus</taxon>
        <taxon>Mimivirus bradfordmassiliense</taxon>
    </lineage>
</organism>
<protein>
    <recommendedName>
        <fullName>Uncharacterized protein R369</fullName>
    </recommendedName>
</protein>
<gene>
    <name type="ordered locus">MIMI_R369</name>
</gene>
<organismHost>
    <name type="scientific">Acanthamoeba polyphaga</name>
    <name type="common">Amoeba</name>
    <dbReference type="NCBI Taxonomy" id="5757"/>
</organismHost>
<proteinExistence type="predicted"/>
<dbReference type="EMBL" id="AY653733">
    <property type="protein sequence ID" value="AAV50638.1"/>
    <property type="molecule type" value="Genomic_DNA"/>
</dbReference>
<dbReference type="KEGG" id="vg:9924990"/>
<dbReference type="Proteomes" id="UP000001134">
    <property type="component" value="Genome"/>
</dbReference>
<reference key="1">
    <citation type="journal article" date="2004" name="Science">
        <title>The 1.2-megabase genome sequence of Mimivirus.</title>
        <authorList>
            <person name="Raoult D."/>
            <person name="Audic S."/>
            <person name="Robert C."/>
            <person name="Abergel C."/>
            <person name="Renesto P."/>
            <person name="Ogata H."/>
            <person name="La Scola B."/>
            <person name="Susan M."/>
            <person name="Claverie J.-M."/>
        </authorList>
    </citation>
    <scope>NUCLEOTIDE SEQUENCE [LARGE SCALE GENOMIC DNA]</scope>
    <source>
        <strain>Rowbotham-Bradford</strain>
    </source>
</reference>